<sequence length="300" mass="32132">MWDYTDKVLELFYDPKNQGVIEENGEPGVKVATGEVGSIACGDALRLHIKVEVESDKIVDSRFQTFGCTSAIASSSALTEMIKGLTLDEALKVSNKDIADYLGGLPEAKMHCSVMGQEALEAAIYNYRGIPLAAHDEDDEGALVCTCFGVSENKVRRIVIENDLTDAEQVTNYIKAGGGCGSCLAKIDDIIKDVKENKAATNLNNKGGSKPTNIPNSGQKRPLTNVQKIALIQKVLDEEVRPVLIADGGDVELYDVDGDIVKVVLQGACGSCSSSTATLKIAIESRLRDRINPSLVVEAV</sequence>
<organism>
    <name type="scientific">Nostoc sp. (strain PCC 7120 / SAG 25.82 / UTEX 2576)</name>
    <dbReference type="NCBI Taxonomy" id="103690"/>
    <lineage>
        <taxon>Bacteria</taxon>
        <taxon>Bacillati</taxon>
        <taxon>Cyanobacteriota</taxon>
        <taxon>Cyanophyceae</taxon>
        <taxon>Nostocales</taxon>
        <taxon>Nostocaceae</taxon>
        <taxon>Nostoc</taxon>
    </lineage>
</organism>
<proteinExistence type="inferred from homology"/>
<dbReference type="EMBL" id="J05111">
    <property type="protein sequence ID" value="AAA22007.1"/>
    <property type="molecule type" value="Genomic_DNA"/>
</dbReference>
<dbReference type="EMBL" id="BA000019">
    <property type="protein sequence ID" value="BAB73412.1"/>
    <property type="molecule type" value="Genomic_DNA"/>
</dbReference>
<dbReference type="PIR" id="AD1988">
    <property type="entry name" value="AD1988"/>
</dbReference>
<dbReference type="RefSeq" id="WP_010995627.1">
    <property type="nucleotide sequence ID" value="NZ_RSCN01000040.1"/>
</dbReference>
<dbReference type="SMR" id="P20628"/>
<dbReference type="STRING" id="103690.gene:10493470"/>
<dbReference type="KEGG" id="ana:all1456"/>
<dbReference type="eggNOG" id="COG0694">
    <property type="taxonomic scope" value="Bacteria"/>
</dbReference>
<dbReference type="eggNOG" id="COG0822">
    <property type="taxonomic scope" value="Bacteria"/>
</dbReference>
<dbReference type="eggNOG" id="COG2906">
    <property type="taxonomic scope" value="Bacteria"/>
</dbReference>
<dbReference type="OrthoDB" id="9804157at2"/>
<dbReference type="Proteomes" id="UP000002483">
    <property type="component" value="Chromosome"/>
</dbReference>
<dbReference type="GO" id="GO:0051537">
    <property type="term" value="F:2 iron, 2 sulfur cluster binding"/>
    <property type="evidence" value="ECO:0007669"/>
    <property type="project" value="UniProtKB-KW"/>
</dbReference>
<dbReference type="GO" id="GO:0005506">
    <property type="term" value="F:iron ion binding"/>
    <property type="evidence" value="ECO:0007669"/>
    <property type="project" value="InterPro"/>
</dbReference>
<dbReference type="GO" id="GO:0016226">
    <property type="term" value="P:iron-sulfur cluster assembly"/>
    <property type="evidence" value="ECO:0007669"/>
    <property type="project" value="InterPro"/>
</dbReference>
<dbReference type="GO" id="GO:0009399">
    <property type="term" value="P:nitrogen fixation"/>
    <property type="evidence" value="ECO:0007669"/>
    <property type="project" value="UniProtKB-KW"/>
</dbReference>
<dbReference type="CDD" id="cd06664">
    <property type="entry name" value="IscU_like"/>
    <property type="match status" value="1"/>
</dbReference>
<dbReference type="CDD" id="cd19947">
    <property type="entry name" value="NifU_Fer2_BFD-like"/>
    <property type="match status" value="1"/>
</dbReference>
<dbReference type="Gene3D" id="3.90.1010.10">
    <property type="match status" value="1"/>
</dbReference>
<dbReference type="Gene3D" id="1.10.10.1100">
    <property type="entry name" value="BFD-like [2Fe-2S]-binding domain"/>
    <property type="match status" value="1"/>
</dbReference>
<dbReference type="Gene3D" id="3.30.300.130">
    <property type="entry name" value="Fe-S cluster assembly (FSCA)"/>
    <property type="match status" value="1"/>
</dbReference>
<dbReference type="InterPro" id="IPR007419">
    <property type="entry name" value="BFD-like_2Fe2S-bd_dom"/>
</dbReference>
<dbReference type="InterPro" id="IPR041854">
    <property type="entry name" value="BFD-like_2Fe2S-bd_dom_sf"/>
</dbReference>
<dbReference type="InterPro" id="IPR034904">
    <property type="entry name" value="FSCA_dom_sf"/>
</dbReference>
<dbReference type="InterPro" id="IPR016217">
    <property type="entry name" value="N_fixation_NifU"/>
</dbReference>
<dbReference type="InterPro" id="IPR010238">
    <property type="entry name" value="NIF_FeS_clus_asmbl_NifU"/>
</dbReference>
<dbReference type="InterPro" id="IPR001075">
    <property type="entry name" value="NIF_FeS_clus_asmbl_NifU_C"/>
</dbReference>
<dbReference type="InterPro" id="IPR002871">
    <property type="entry name" value="NIF_FeS_clus_asmbl_NifU_N"/>
</dbReference>
<dbReference type="NCBIfam" id="TIGR02000">
    <property type="entry name" value="NifU_proper"/>
    <property type="match status" value="1"/>
</dbReference>
<dbReference type="PANTHER" id="PTHR10093">
    <property type="entry name" value="IRON-SULFUR CLUSTER ASSEMBLY ENZYME NIFU HOMOLOG"/>
    <property type="match status" value="1"/>
</dbReference>
<dbReference type="Pfam" id="PF04324">
    <property type="entry name" value="Fer2_BFD"/>
    <property type="match status" value="1"/>
</dbReference>
<dbReference type="Pfam" id="PF01106">
    <property type="entry name" value="NifU"/>
    <property type="match status" value="1"/>
</dbReference>
<dbReference type="Pfam" id="PF01592">
    <property type="entry name" value="NifU_N"/>
    <property type="match status" value="1"/>
</dbReference>
<dbReference type="PIRSF" id="PIRSF000375">
    <property type="entry name" value="NifU"/>
    <property type="match status" value="1"/>
</dbReference>
<dbReference type="SUPFAM" id="SSF117916">
    <property type="entry name" value="Fe-S cluster assembly (FSCA) domain-like"/>
    <property type="match status" value="1"/>
</dbReference>
<dbReference type="SUPFAM" id="SSF82649">
    <property type="entry name" value="SufE/NifU"/>
    <property type="match status" value="1"/>
</dbReference>
<feature type="chain" id="PRO_0000166173" description="Nitrogen fixation protein NifU">
    <location>
        <begin position="1"/>
        <end position="300"/>
    </location>
</feature>
<feature type="region of interest" description="Disordered" evidence="2">
    <location>
        <begin position="201"/>
        <end position="220"/>
    </location>
</feature>
<feature type="binding site" evidence="1">
    <location>
        <position position="145"/>
    </location>
    <ligand>
        <name>[2Fe-2S] cluster</name>
        <dbReference type="ChEBI" id="CHEBI:190135"/>
    </ligand>
</feature>
<feature type="binding site" evidence="1">
    <location>
        <position position="147"/>
    </location>
    <ligand>
        <name>[2Fe-2S] cluster</name>
        <dbReference type="ChEBI" id="CHEBI:190135"/>
    </ligand>
</feature>
<feature type="binding site" evidence="1">
    <location>
        <position position="180"/>
    </location>
    <ligand>
        <name>[2Fe-2S] cluster</name>
        <dbReference type="ChEBI" id="CHEBI:190135"/>
    </ligand>
</feature>
<feature type="binding site" evidence="1">
    <location>
        <position position="183"/>
    </location>
    <ligand>
        <name>[2Fe-2S] cluster</name>
        <dbReference type="ChEBI" id="CHEBI:190135"/>
    </ligand>
</feature>
<comment type="function">
    <text evidence="3">May be involved in the formation or repair of [Fe-S] clusters present in iron-sulfur proteins.</text>
</comment>
<comment type="cofactor">
    <cofactor evidence="1">
        <name>[2Fe-2S] cluster</name>
        <dbReference type="ChEBI" id="CHEBI:190135"/>
    </cofactor>
    <text evidence="1">Binds 1 [2Fe-2S] cluster per subunit.</text>
</comment>
<comment type="similarity">
    <text evidence="3">Belongs to the NifU family.</text>
</comment>
<gene>
    <name type="primary">nifU</name>
    <name type="ordered locus">all1456</name>
</gene>
<name>NIFU_NOSS1</name>
<accession>P20628</accession>
<keyword id="KW-0001">2Fe-2S</keyword>
<keyword id="KW-0408">Iron</keyword>
<keyword id="KW-0411">Iron-sulfur</keyword>
<keyword id="KW-0479">Metal-binding</keyword>
<keyword id="KW-0535">Nitrogen fixation</keyword>
<keyword id="KW-1185">Reference proteome</keyword>
<reference key="1">
    <citation type="journal article" date="1989" name="J. Biol. Chem.">
        <title>Nitrogen fixation (nif) genes of the cyanobacterium Anabaena species strain PCC 7120. The nifB-fdxN-nifS-nifU operon.</title>
        <authorList>
            <person name="Mulligan M.E."/>
            <person name="Haselkorn R."/>
        </authorList>
    </citation>
    <scope>NUCLEOTIDE SEQUENCE [GENOMIC DNA]</scope>
</reference>
<reference key="2">
    <citation type="journal article" date="2001" name="DNA Res.">
        <title>Complete genomic sequence of the filamentous nitrogen-fixing cyanobacterium Anabaena sp. strain PCC 7120.</title>
        <authorList>
            <person name="Kaneko T."/>
            <person name="Nakamura Y."/>
            <person name="Wolk C.P."/>
            <person name="Kuritz T."/>
            <person name="Sasamoto S."/>
            <person name="Watanabe A."/>
            <person name="Iriguchi M."/>
            <person name="Ishikawa A."/>
            <person name="Kawashima K."/>
            <person name="Kimura T."/>
            <person name="Kishida Y."/>
            <person name="Kohara M."/>
            <person name="Matsumoto M."/>
            <person name="Matsuno A."/>
            <person name="Muraki A."/>
            <person name="Nakazaki N."/>
            <person name="Shimpo S."/>
            <person name="Sugimoto M."/>
            <person name="Takazawa M."/>
            <person name="Yamada M."/>
            <person name="Yasuda M."/>
            <person name="Tabata S."/>
        </authorList>
    </citation>
    <scope>NUCLEOTIDE SEQUENCE [LARGE SCALE GENOMIC DNA]</scope>
    <source>
        <strain>PCC 7120 / SAG 25.82 / UTEX 2576</strain>
    </source>
</reference>
<evidence type="ECO:0000250" key="1">
    <source>
        <dbReference type="UniProtKB" id="P05340"/>
    </source>
</evidence>
<evidence type="ECO:0000256" key="2">
    <source>
        <dbReference type="SAM" id="MobiDB-lite"/>
    </source>
</evidence>
<evidence type="ECO:0000305" key="3"/>
<protein>
    <recommendedName>
        <fullName>Nitrogen fixation protein NifU</fullName>
    </recommendedName>
</protein>